<reference key="1">
    <citation type="journal article" date="1976" name="J. Biochem.">
        <title>Amino acid sequence of eel calcitonin.</title>
        <authorList>
            <person name="Noda T."/>
            <person name="Narita K."/>
        </authorList>
    </citation>
    <scope>PROTEIN SEQUENCE</scope>
    <scope>AMIDATION AT PRO-32</scope>
</reference>
<reference key="2">
    <citation type="journal article" date="1999" name="Biochemistry">
        <title>Effects of glycosylation on the structure and dynamics of eel calcitonin in micelles and lipid bilayers determined by nuclear magnetic resonance spectroscopy.</title>
        <authorList>
            <person name="Hashimoto Y."/>
            <person name="Toma K."/>
            <person name="Nishikido J."/>
            <person name="Yamamoto K."/>
            <person name="Haneda K."/>
            <person name="Inazu T."/>
            <person name="Valentine K.G."/>
            <person name="Opella S.J."/>
        </authorList>
    </citation>
    <scope>STRUCTURE BY NMR</scope>
</reference>
<dbReference type="PIR" id="A01529">
    <property type="entry name" value="TCEE"/>
</dbReference>
<dbReference type="PDB" id="1BKU">
    <property type="method" value="NMR"/>
    <property type="chains" value="A=1-32"/>
</dbReference>
<dbReference type="PDB" id="1BYV">
    <property type="method" value="NMR"/>
    <property type="chains" value="A=1-32"/>
</dbReference>
<dbReference type="PDB" id="1BZB">
    <property type="method" value="NMR"/>
    <property type="chains" value="A=1-32"/>
</dbReference>
<dbReference type="PDBsum" id="1BKU"/>
<dbReference type="PDBsum" id="1BYV"/>
<dbReference type="PDBsum" id="1BZB"/>
<dbReference type="BMRB" id="P01262"/>
<dbReference type="SMR" id="P01262"/>
<dbReference type="EvolutionaryTrace" id="P01262"/>
<dbReference type="GO" id="GO:0005576">
    <property type="term" value="C:extracellular region"/>
    <property type="evidence" value="ECO:0007669"/>
    <property type="project" value="UniProtKB-SubCell"/>
</dbReference>
<dbReference type="GO" id="GO:0005179">
    <property type="term" value="F:hormone activity"/>
    <property type="evidence" value="ECO:0007669"/>
    <property type="project" value="UniProtKB-KW"/>
</dbReference>
<dbReference type="InterPro" id="IPR021118">
    <property type="entry name" value="Calcitonin"/>
</dbReference>
<dbReference type="InterPro" id="IPR021116">
    <property type="entry name" value="Calcitonin/adrenomedullin"/>
</dbReference>
<dbReference type="InterPro" id="IPR018360">
    <property type="entry name" value="Calcitonin_CS"/>
</dbReference>
<dbReference type="InterPro" id="IPR001693">
    <property type="entry name" value="Calcitonin_peptide-like"/>
</dbReference>
<dbReference type="Pfam" id="PF00214">
    <property type="entry name" value="Calc_CGRP_IAPP"/>
    <property type="match status" value="1"/>
</dbReference>
<dbReference type="PRINTS" id="PR00270">
    <property type="entry name" value="CALCITONINA"/>
</dbReference>
<dbReference type="SMART" id="SM00113">
    <property type="entry name" value="CALCITONIN"/>
    <property type="match status" value="1"/>
</dbReference>
<dbReference type="PROSITE" id="PS00258">
    <property type="entry name" value="CALCITONIN"/>
    <property type="match status" value="1"/>
</dbReference>
<accession>P01262</accession>
<protein>
    <recommendedName>
        <fullName evidence="3">Calcitonin</fullName>
    </recommendedName>
</protein>
<organism>
    <name type="scientific">Anguilla japonica</name>
    <name type="common">Japanese eel</name>
    <dbReference type="NCBI Taxonomy" id="7937"/>
    <lineage>
        <taxon>Eukaryota</taxon>
        <taxon>Metazoa</taxon>
        <taxon>Chordata</taxon>
        <taxon>Craniata</taxon>
        <taxon>Vertebrata</taxon>
        <taxon>Euteleostomi</taxon>
        <taxon>Actinopterygii</taxon>
        <taxon>Neopterygii</taxon>
        <taxon>Teleostei</taxon>
        <taxon>Anguilliformes</taxon>
        <taxon>Anguillidae</taxon>
        <taxon>Anguilla</taxon>
    </lineage>
</organism>
<sequence length="32" mass="3418">CSNLSTCVLGKLSQELHKLQTYPRTDVGAGTP</sequence>
<proteinExistence type="evidence at protein level"/>
<keyword id="KW-0002">3D-structure</keyword>
<keyword id="KW-0027">Amidation</keyword>
<keyword id="KW-0903">Direct protein sequencing</keyword>
<keyword id="KW-1015">Disulfide bond</keyword>
<keyword id="KW-0372">Hormone</keyword>
<keyword id="KW-0964">Secreted</keyword>
<evidence type="ECO:0000250" key="1">
    <source>
        <dbReference type="UniProtKB" id="P01258"/>
    </source>
</evidence>
<evidence type="ECO:0000269" key="2">
    <source ref="1"/>
</evidence>
<evidence type="ECO:0000303" key="3">
    <source ref="1"/>
</evidence>
<evidence type="ECO:0000305" key="4"/>
<evidence type="ECO:0007829" key="5">
    <source>
        <dbReference type="PDB" id="1BKU"/>
    </source>
</evidence>
<evidence type="ECO:0007829" key="6">
    <source>
        <dbReference type="PDB" id="1BYV"/>
    </source>
</evidence>
<name>CALC_ANGJA</name>
<feature type="peptide" id="PRO_0000044669" description="Calcitonin">
    <location>
        <begin position="1"/>
        <end position="32"/>
    </location>
</feature>
<feature type="modified residue" description="Proline amide" evidence="2">
    <location>
        <position position="32"/>
    </location>
</feature>
<feature type="disulfide bond" evidence="1">
    <location>
        <begin position="1"/>
        <end position="7"/>
    </location>
</feature>
<feature type="helix" evidence="5">
    <location>
        <begin position="5"/>
        <end position="19"/>
    </location>
</feature>
<feature type="strand" evidence="5">
    <location>
        <begin position="23"/>
        <end position="26"/>
    </location>
</feature>
<feature type="strand" evidence="6">
    <location>
        <begin position="27"/>
        <end position="29"/>
    </location>
</feature>
<comment type="function">
    <text>Causes a rapid but short-lived drop in the level of calcium and phosphate in blood by promoting the incorporation of those ions in the bones.</text>
</comment>
<comment type="subcellular location">
    <subcellularLocation>
        <location>Secreted</location>
    </subcellularLocation>
</comment>
<comment type="similarity">
    <text evidence="4">Belongs to the calcitonin family.</text>
</comment>